<organism>
    <name type="scientific">Clostridium novyi (strain NT)</name>
    <dbReference type="NCBI Taxonomy" id="386415"/>
    <lineage>
        <taxon>Bacteria</taxon>
        <taxon>Bacillati</taxon>
        <taxon>Bacillota</taxon>
        <taxon>Clostridia</taxon>
        <taxon>Eubacteriales</taxon>
        <taxon>Clostridiaceae</taxon>
        <taxon>Clostridium</taxon>
    </lineage>
</organism>
<protein>
    <recommendedName>
        <fullName evidence="1">Translational regulator CsrA</fullName>
    </recommendedName>
</protein>
<keyword id="KW-1005">Bacterial flagellum biogenesis</keyword>
<keyword id="KW-0963">Cytoplasm</keyword>
<keyword id="KW-1185">Reference proteome</keyword>
<keyword id="KW-0678">Repressor</keyword>
<keyword id="KW-0694">RNA-binding</keyword>
<keyword id="KW-0810">Translation regulation</keyword>
<feature type="chain" id="PRO_1000023373" description="Translational regulator CsrA">
    <location>
        <begin position="1"/>
        <end position="72"/>
    </location>
</feature>
<accession>A0PZZ6</accession>
<gene>
    <name evidence="1" type="primary">csrA</name>
    <name type="ordered locus">NT01CX_1875</name>
</gene>
<sequence length="72" mass="8262">MLVVKRKKGESILIGDNIEINIVDIDNGSVKISIQAPREVTILRKELYKEIEEENKKAIKVDMSLLKKLNKK</sequence>
<proteinExistence type="inferred from homology"/>
<evidence type="ECO:0000255" key="1">
    <source>
        <dbReference type="HAMAP-Rule" id="MF_00167"/>
    </source>
</evidence>
<name>CSRA_CLONN</name>
<comment type="function">
    <text evidence="1">A translational regulator that binds mRNA to regulate translation initiation and/or mRNA stability. Usually binds in the 5'-UTR at or near the Shine-Dalgarno sequence preventing ribosome-binding, thus repressing translation. Its main target seems to be the major flagellin gene, while its function is anatagonized by FliW.</text>
</comment>
<comment type="subunit">
    <text evidence="1">Homodimer; the beta-strands of each monomer intercalate to form a hydrophobic core, while the alpha-helices form wings that extend away from the core.</text>
</comment>
<comment type="subcellular location">
    <subcellularLocation>
        <location evidence="1">Cytoplasm</location>
    </subcellularLocation>
</comment>
<comment type="similarity">
    <text evidence="1">Belongs to the CsrA/RsmA family.</text>
</comment>
<dbReference type="EMBL" id="CP000382">
    <property type="protein sequence ID" value="ABK60816.1"/>
    <property type="molecule type" value="Genomic_DNA"/>
</dbReference>
<dbReference type="RefSeq" id="WP_011721952.1">
    <property type="nucleotide sequence ID" value="NC_008593.1"/>
</dbReference>
<dbReference type="SMR" id="A0PZZ6"/>
<dbReference type="STRING" id="386415.NT01CX_1875"/>
<dbReference type="KEGG" id="cno:NT01CX_1875"/>
<dbReference type="PATRIC" id="fig|386415.7.peg.977"/>
<dbReference type="eggNOG" id="COG1551">
    <property type="taxonomic scope" value="Bacteria"/>
</dbReference>
<dbReference type="HOGENOM" id="CLU_164837_0_1_9"/>
<dbReference type="Proteomes" id="UP000008220">
    <property type="component" value="Chromosome"/>
</dbReference>
<dbReference type="GO" id="GO:0005829">
    <property type="term" value="C:cytosol"/>
    <property type="evidence" value="ECO:0007669"/>
    <property type="project" value="TreeGrafter"/>
</dbReference>
<dbReference type="GO" id="GO:0048027">
    <property type="term" value="F:mRNA 5'-UTR binding"/>
    <property type="evidence" value="ECO:0007669"/>
    <property type="project" value="UniProtKB-UniRule"/>
</dbReference>
<dbReference type="GO" id="GO:0044781">
    <property type="term" value="P:bacterial-type flagellum organization"/>
    <property type="evidence" value="ECO:0007669"/>
    <property type="project" value="UniProtKB-KW"/>
</dbReference>
<dbReference type="GO" id="GO:0006402">
    <property type="term" value="P:mRNA catabolic process"/>
    <property type="evidence" value="ECO:0007669"/>
    <property type="project" value="InterPro"/>
</dbReference>
<dbReference type="GO" id="GO:0045947">
    <property type="term" value="P:negative regulation of translational initiation"/>
    <property type="evidence" value="ECO:0007669"/>
    <property type="project" value="UniProtKB-UniRule"/>
</dbReference>
<dbReference type="GO" id="GO:1902208">
    <property type="term" value="P:regulation of bacterial-type flagellum assembly"/>
    <property type="evidence" value="ECO:0007669"/>
    <property type="project" value="UniProtKB-UniRule"/>
</dbReference>
<dbReference type="GO" id="GO:0006109">
    <property type="term" value="P:regulation of carbohydrate metabolic process"/>
    <property type="evidence" value="ECO:0007669"/>
    <property type="project" value="InterPro"/>
</dbReference>
<dbReference type="FunFam" id="2.60.40.4380:FF:000002">
    <property type="entry name" value="Translational regulator CsrA"/>
    <property type="match status" value="1"/>
</dbReference>
<dbReference type="Gene3D" id="2.60.40.4380">
    <property type="entry name" value="Translational regulator CsrA"/>
    <property type="match status" value="1"/>
</dbReference>
<dbReference type="HAMAP" id="MF_00167">
    <property type="entry name" value="CsrA"/>
    <property type="match status" value="1"/>
</dbReference>
<dbReference type="InterPro" id="IPR003751">
    <property type="entry name" value="CsrA"/>
</dbReference>
<dbReference type="InterPro" id="IPR036107">
    <property type="entry name" value="CsrA_sf"/>
</dbReference>
<dbReference type="NCBIfam" id="TIGR00202">
    <property type="entry name" value="csrA"/>
    <property type="match status" value="1"/>
</dbReference>
<dbReference type="NCBIfam" id="NF002469">
    <property type="entry name" value="PRK01712.1"/>
    <property type="match status" value="1"/>
</dbReference>
<dbReference type="PANTHER" id="PTHR34984">
    <property type="entry name" value="CARBON STORAGE REGULATOR"/>
    <property type="match status" value="1"/>
</dbReference>
<dbReference type="PANTHER" id="PTHR34984:SF1">
    <property type="entry name" value="CARBON STORAGE REGULATOR"/>
    <property type="match status" value="1"/>
</dbReference>
<dbReference type="Pfam" id="PF02599">
    <property type="entry name" value="CsrA"/>
    <property type="match status" value="1"/>
</dbReference>
<dbReference type="SUPFAM" id="SSF117130">
    <property type="entry name" value="CsrA-like"/>
    <property type="match status" value="1"/>
</dbReference>
<reference key="1">
    <citation type="journal article" date="2006" name="Nat. Biotechnol.">
        <title>The genome and transcriptomes of the anti-tumor agent Clostridium novyi-NT.</title>
        <authorList>
            <person name="Bettegowda C."/>
            <person name="Huang X."/>
            <person name="Lin J."/>
            <person name="Cheong I."/>
            <person name="Kohli M."/>
            <person name="Szabo S.A."/>
            <person name="Zhang X."/>
            <person name="Diaz L.A. Jr."/>
            <person name="Velculescu V.E."/>
            <person name="Parmigiani G."/>
            <person name="Kinzler K.W."/>
            <person name="Vogelstein B."/>
            <person name="Zhou S."/>
        </authorList>
    </citation>
    <scope>NUCLEOTIDE SEQUENCE [LARGE SCALE GENOMIC DNA]</scope>
    <source>
        <strain>NT</strain>
    </source>
</reference>